<dbReference type="EC" id="2.1.1.14" evidence="1"/>
<dbReference type="EMBL" id="AP008232">
    <property type="protein sequence ID" value="BAE73367.1"/>
    <property type="molecule type" value="Genomic_DNA"/>
</dbReference>
<dbReference type="RefSeq" id="WP_011409957.1">
    <property type="nucleotide sequence ID" value="NC_007712.1"/>
</dbReference>
<dbReference type="SMR" id="Q2NWV8"/>
<dbReference type="STRING" id="343509.SG0092"/>
<dbReference type="KEGG" id="sgl:SG0092"/>
<dbReference type="eggNOG" id="COG0620">
    <property type="taxonomic scope" value="Bacteria"/>
</dbReference>
<dbReference type="HOGENOM" id="CLU_013175_0_0_6"/>
<dbReference type="OrthoDB" id="244285at2"/>
<dbReference type="BioCyc" id="SGLO343509:SGP1_RS00710-MONOMER"/>
<dbReference type="UniPathway" id="UPA00051">
    <property type="reaction ID" value="UER00082"/>
</dbReference>
<dbReference type="Proteomes" id="UP000001932">
    <property type="component" value="Chromosome"/>
</dbReference>
<dbReference type="GO" id="GO:0003871">
    <property type="term" value="F:5-methyltetrahydropteroyltriglutamate-homocysteine S-methyltransferase activity"/>
    <property type="evidence" value="ECO:0007669"/>
    <property type="project" value="UniProtKB-UniRule"/>
</dbReference>
<dbReference type="GO" id="GO:0008270">
    <property type="term" value="F:zinc ion binding"/>
    <property type="evidence" value="ECO:0007669"/>
    <property type="project" value="InterPro"/>
</dbReference>
<dbReference type="GO" id="GO:0009086">
    <property type="term" value="P:methionine biosynthetic process"/>
    <property type="evidence" value="ECO:0007669"/>
    <property type="project" value="UniProtKB-UniRule"/>
</dbReference>
<dbReference type="GO" id="GO:0032259">
    <property type="term" value="P:methylation"/>
    <property type="evidence" value="ECO:0007669"/>
    <property type="project" value="UniProtKB-KW"/>
</dbReference>
<dbReference type="CDD" id="cd03311">
    <property type="entry name" value="CIMS_C_terminal_like"/>
    <property type="match status" value="1"/>
</dbReference>
<dbReference type="CDD" id="cd03312">
    <property type="entry name" value="CIMS_N_terminal_like"/>
    <property type="match status" value="1"/>
</dbReference>
<dbReference type="FunFam" id="3.20.20.210:FF:000002">
    <property type="entry name" value="5-methyltetrahydropteroyltriglutamate--homocysteine methyltransferase"/>
    <property type="match status" value="1"/>
</dbReference>
<dbReference type="FunFam" id="3.20.20.210:FF:000003">
    <property type="entry name" value="5-methyltetrahydropteroyltriglutamate--homocysteine methyltransferase"/>
    <property type="match status" value="1"/>
</dbReference>
<dbReference type="Gene3D" id="3.20.20.210">
    <property type="match status" value="2"/>
</dbReference>
<dbReference type="HAMAP" id="MF_00172">
    <property type="entry name" value="Meth_synth"/>
    <property type="match status" value="1"/>
</dbReference>
<dbReference type="InterPro" id="IPR013215">
    <property type="entry name" value="Cbl-indep_Met_Synth_N"/>
</dbReference>
<dbReference type="InterPro" id="IPR006276">
    <property type="entry name" value="Cobalamin-indep_Met_synthase"/>
</dbReference>
<dbReference type="InterPro" id="IPR002629">
    <property type="entry name" value="Met_Synth_C/arc"/>
</dbReference>
<dbReference type="InterPro" id="IPR038071">
    <property type="entry name" value="UROD/MetE-like_sf"/>
</dbReference>
<dbReference type="NCBIfam" id="TIGR01371">
    <property type="entry name" value="met_syn_B12ind"/>
    <property type="match status" value="1"/>
</dbReference>
<dbReference type="NCBIfam" id="NF003556">
    <property type="entry name" value="PRK05222.1"/>
    <property type="match status" value="1"/>
</dbReference>
<dbReference type="PANTHER" id="PTHR30519">
    <property type="entry name" value="5-METHYLTETRAHYDROPTEROYLTRIGLUTAMATE--HOMOCYSTEINE METHYLTRANSFERASE"/>
    <property type="match status" value="1"/>
</dbReference>
<dbReference type="Pfam" id="PF08267">
    <property type="entry name" value="Meth_synt_1"/>
    <property type="match status" value="1"/>
</dbReference>
<dbReference type="Pfam" id="PF01717">
    <property type="entry name" value="Meth_synt_2"/>
    <property type="match status" value="1"/>
</dbReference>
<dbReference type="PIRSF" id="PIRSF000382">
    <property type="entry name" value="MeTrfase_B12_ind"/>
    <property type="match status" value="1"/>
</dbReference>
<dbReference type="SUPFAM" id="SSF51726">
    <property type="entry name" value="UROD/MetE-like"/>
    <property type="match status" value="2"/>
</dbReference>
<feature type="chain" id="PRO_1000017276" description="5-methyltetrahydropteroyltriglutamate--homocysteine methyltransferase">
    <location>
        <begin position="1"/>
        <end position="758"/>
    </location>
</feature>
<feature type="active site" description="Proton donor" evidence="1">
    <location>
        <position position="697"/>
    </location>
</feature>
<feature type="binding site" evidence="1">
    <location>
        <begin position="17"/>
        <end position="20"/>
    </location>
    <ligand>
        <name>5-methyltetrahydropteroyltri-L-glutamate</name>
        <dbReference type="ChEBI" id="CHEBI:58207"/>
    </ligand>
</feature>
<feature type="binding site" evidence="1">
    <location>
        <position position="117"/>
    </location>
    <ligand>
        <name>5-methyltetrahydropteroyltri-L-glutamate</name>
        <dbReference type="ChEBI" id="CHEBI:58207"/>
    </ligand>
</feature>
<feature type="binding site" evidence="1">
    <location>
        <begin position="434"/>
        <end position="436"/>
    </location>
    <ligand>
        <name>L-homocysteine</name>
        <dbReference type="ChEBI" id="CHEBI:58199"/>
    </ligand>
</feature>
<feature type="binding site" evidence="1">
    <location>
        <begin position="434"/>
        <end position="436"/>
    </location>
    <ligand>
        <name>L-methionine</name>
        <dbReference type="ChEBI" id="CHEBI:57844"/>
    </ligand>
</feature>
<feature type="binding site" evidence="1">
    <location>
        <position position="487"/>
    </location>
    <ligand>
        <name>L-homocysteine</name>
        <dbReference type="ChEBI" id="CHEBI:58199"/>
    </ligand>
</feature>
<feature type="binding site" evidence="1">
    <location>
        <position position="487"/>
    </location>
    <ligand>
        <name>L-methionine</name>
        <dbReference type="ChEBI" id="CHEBI:57844"/>
    </ligand>
</feature>
<feature type="binding site" evidence="1">
    <location>
        <begin position="518"/>
        <end position="519"/>
    </location>
    <ligand>
        <name>5-methyltetrahydropteroyltri-L-glutamate</name>
        <dbReference type="ChEBI" id="CHEBI:58207"/>
    </ligand>
</feature>
<feature type="binding site" evidence="1">
    <location>
        <position position="564"/>
    </location>
    <ligand>
        <name>5-methyltetrahydropteroyltri-L-glutamate</name>
        <dbReference type="ChEBI" id="CHEBI:58207"/>
    </ligand>
</feature>
<feature type="binding site" evidence="1">
    <location>
        <position position="602"/>
    </location>
    <ligand>
        <name>L-homocysteine</name>
        <dbReference type="ChEBI" id="CHEBI:58199"/>
    </ligand>
</feature>
<feature type="binding site" evidence="1">
    <location>
        <position position="602"/>
    </location>
    <ligand>
        <name>L-methionine</name>
        <dbReference type="ChEBI" id="CHEBI:57844"/>
    </ligand>
</feature>
<feature type="binding site" evidence="1">
    <location>
        <position position="608"/>
    </location>
    <ligand>
        <name>5-methyltetrahydropteroyltri-L-glutamate</name>
        <dbReference type="ChEBI" id="CHEBI:58207"/>
    </ligand>
</feature>
<feature type="binding site" evidence="1">
    <location>
        <position position="644"/>
    </location>
    <ligand>
        <name>Zn(2+)</name>
        <dbReference type="ChEBI" id="CHEBI:29105"/>
        <note>catalytic</note>
    </ligand>
</feature>
<feature type="binding site" evidence="1">
    <location>
        <position position="646"/>
    </location>
    <ligand>
        <name>Zn(2+)</name>
        <dbReference type="ChEBI" id="CHEBI:29105"/>
        <note>catalytic</note>
    </ligand>
</feature>
<feature type="binding site" evidence="1">
    <location>
        <position position="668"/>
    </location>
    <ligand>
        <name>Zn(2+)</name>
        <dbReference type="ChEBI" id="CHEBI:29105"/>
        <note>catalytic</note>
    </ligand>
</feature>
<feature type="binding site" evidence="1">
    <location>
        <position position="729"/>
    </location>
    <ligand>
        <name>Zn(2+)</name>
        <dbReference type="ChEBI" id="CHEBI:29105"/>
        <note>catalytic</note>
    </ligand>
</feature>
<gene>
    <name evidence="1" type="primary">metE</name>
    <name type="ordered locus">SG0092</name>
</gene>
<organism>
    <name type="scientific">Sodalis glossinidius (strain morsitans)</name>
    <dbReference type="NCBI Taxonomy" id="343509"/>
    <lineage>
        <taxon>Bacteria</taxon>
        <taxon>Pseudomonadati</taxon>
        <taxon>Pseudomonadota</taxon>
        <taxon>Gammaproteobacteria</taxon>
        <taxon>Enterobacterales</taxon>
        <taxon>Bruguierivoracaceae</taxon>
        <taxon>Sodalis</taxon>
    </lineage>
</organism>
<proteinExistence type="inferred from homology"/>
<reference key="1">
    <citation type="journal article" date="2006" name="Genome Res.">
        <title>Massive genome erosion and functional adaptations provide insights into the symbiotic lifestyle of Sodalis glossinidius in the tsetse host.</title>
        <authorList>
            <person name="Toh H."/>
            <person name="Weiss B.L."/>
            <person name="Perkin S.A.H."/>
            <person name="Yamashita A."/>
            <person name="Oshima K."/>
            <person name="Hattori M."/>
            <person name="Aksoy S."/>
        </authorList>
    </citation>
    <scope>NUCLEOTIDE SEQUENCE [LARGE SCALE GENOMIC DNA]</scope>
    <source>
        <strain>morsitans</strain>
    </source>
</reference>
<sequence>MAILSHTLGFPRVGLHRELKKAQESYWAGNISQQQLLETGRELRARHWQQQKDAGVDLLPVGDFAWYDHVLTTSLMLDNVPARHRSGANESDIDTLFRIGRGRAPTGEPAAAAEMTKWFNTNYHYMVPEFTLGQQFRLGWTQLLDEVDEALALGHRVKPVLLGPVSYLWLGKVKGEAFDRLSLLPALLPVYKQVLGELAKRGVDWVQIDEQALVLELPQAWREAYREAYQALQGQTKLLLTTYFDSIRHQLDIITALPVQGLHVDLVAGDDDLTELHRQLPAEWVLSAGVINGRNVWRADLQSWFEQLRPLLGKRELWLGSSCSLLHSPIDLSTETQLDEEVKSWFAFALQKCAELGLLRAALNAPDEANQARLGEYSAPIRARRHSSRVHNPEVKARLEKITAADSQRQQPYAARAALQRARFKLPAWPTTTIGSFPQTTEIRGLRLDFKRGRLDGGHYRTGISEHIKQAIVEQERLGLDVLVHGEAERNDMVEYFGEHLDGFVFTQNGWVQSYGSRCVKPPIIIGDISRPEAITIEWARYAQSLTAKPVKGMLTGPVTILCWSFPREDVSRKTIARQIALALRDEVADLEQAGIGVIQIDEPALREGLPLKHSAWQDYLTWAVEAFRLNAAVAQDDTQIHTHMCYCEFNDIMDSIAALDADVITIETSRSDMELLETFKEFDYPNEIGPGVYDIHSPNVPSEEWIVELLRKAAQRIPAERLWVNPDCGLKTRAWPETRQSLANMVTAARKLREEQP</sequence>
<evidence type="ECO:0000255" key="1">
    <source>
        <dbReference type="HAMAP-Rule" id="MF_00172"/>
    </source>
</evidence>
<accession>Q2NWV8</accession>
<name>METE_SODGM</name>
<comment type="function">
    <text evidence="1">Catalyzes the transfer of a methyl group from 5-methyltetrahydrofolate to homocysteine resulting in methionine formation.</text>
</comment>
<comment type="catalytic activity">
    <reaction evidence="1">
        <text>5-methyltetrahydropteroyltri-L-glutamate + L-homocysteine = tetrahydropteroyltri-L-glutamate + L-methionine</text>
        <dbReference type="Rhea" id="RHEA:21196"/>
        <dbReference type="ChEBI" id="CHEBI:57844"/>
        <dbReference type="ChEBI" id="CHEBI:58140"/>
        <dbReference type="ChEBI" id="CHEBI:58199"/>
        <dbReference type="ChEBI" id="CHEBI:58207"/>
        <dbReference type="EC" id="2.1.1.14"/>
    </reaction>
</comment>
<comment type="cofactor">
    <cofactor evidence="1">
        <name>Zn(2+)</name>
        <dbReference type="ChEBI" id="CHEBI:29105"/>
    </cofactor>
    <text evidence="1">Binds 1 zinc ion per subunit.</text>
</comment>
<comment type="pathway">
    <text evidence="1">Amino-acid biosynthesis; L-methionine biosynthesis via de novo pathway; L-methionine from L-homocysteine (MetE route): step 1/1.</text>
</comment>
<comment type="similarity">
    <text evidence="1">Belongs to the vitamin-B12 independent methionine synthase family.</text>
</comment>
<keyword id="KW-0028">Amino-acid biosynthesis</keyword>
<keyword id="KW-0479">Metal-binding</keyword>
<keyword id="KW-0486">Methionine biosynthesis</keyword>
<keyword id="KW-0489">Methyltransferase</keyword>
<keyword id="KW-0677">Repeat</keyword>
<keyword id="KW-0808">Transferase</keyword>
<keyword id="KW-0862">Zinc</keyword>
<protein>
    <recommendedName>
        <fullName evidence="1">5-methyltetrahydropteroyltriglutamate--homocysteine methyltransferase</fullName>
        <ecNumber evidence="1">2.1.1.14</ecNumber>
    </recommendedName>
    <alternativeName>
        <fullName evidence="1">Cobalamin-independent methionine synthase</fullName>
    </alternativeName>
    <alternativeName>
        <fullName evidence="1">Methionine synthase, vitamin-B12 independent isozyme</fullName>
    </alternativeName>
</protein>